<reference key="1">
    <citation type="journal article" date="2004" name="Proc. Natl. Acad. Sci. U.S.A.">
        <title>The genome sequence of the probiotic intestinal bacterium Lactobacillus johnsonii NCC 533.</title>
        <authorList>
            <person name="Pridmore R.D."/>
            <person name="Berger B."/>
            <person name="Desiere F."/>
            <person name="Vilanova D."/>
            <person name="Barretto C."/>
            <person name="Pittet A.-C."/>
            <person name="Zwahlen M.-C."/>
            <person name="Rouvet M."/>
            <person name="Altermann E."/>
            <person name="Barrangou R."/>
            <person name="Mollet B."/>
            <person name="Mercenier A."/>
            <person name="Klaenhammer T."/>
            <person name="Arigoni F."/>
            <person name="Schell M.A."/>
        </authorList>
    </citation>
    <scope>NUCLEOTIDE SEQUENCE [LARGE SCALE GENOMIC DNA]</scope>
    <source>
        <strain>CNCM I-1225 / La1 / NCC 533</strain>
    </source>
</reference>
<comment type="similarity">
    <text evidence="1">Belongs to the bacterial ribosomal protein bL33 family.</text>
</comment>
<dbReference type="EMBL" id="AE017198">
    <property type="protein sequence ID" value="AAS09391.1"/>
    <property type="molecule type" value="Genomic_DNA"/>
</dbReference>
<dbReference type="SMR" id="Q74IE7"/>
<dbReference type="KEGG" id="ljo:LJ_1619b"/>
<dbReference type="eggNOG" id="COG0267">
    <property type="taxonomic scope" value="Bacteria"/>
</dbReference>
<dbReference type="HOGENOM" id="CLU_190949_0_2_9"/>
<dbReference type="Proteomes" id="UP000000581">
    <property type="component" value="Chromosome"/>
</dbReference>
<dbReference type="GO" id="GO:0005737">
    <property type="term" value="C:cytoplasm"/>
    <property type="evidence" value="ECO:0007669"/>
    <property type="project" value="UniProtKB-ARBA"/>
</dbReference>
<dbReference type="GO" id="GO:1990904">
    <property type="term" value="C:ribonucleoprotein complex"/>
    <property type="evidence" value="ECO:0007669"/>
    <property type="project" value="UniProtKB-KW"/>
</dbReference>
<dbReference type="GO" id="GO:0005840">
    <property type="term" value="C:ribosome"/>
    <property type="evidence" value="ECO:0007669"/>
    <property type="project" value="UniProtKB-KW"/>
</dbReference>
<dbReference type="GO" id="GO:0003735">
    <property type="term" value="F:structural constituent of ribosome"/>
    <property type="evidence" value="ECO:0007669"/>
    <property type="project" value="InterPro"/>
</dbReference>
<dbReference type="GO" id="GO:0006412">
    <property type="term" value="P:translation"/>
    <property type="evidence" value="ECO:0007669"/>
    <property type="project" value="UniProtKB-UniRule"/>
</dbReference>
<dbReference type="Gene3D" id="2.20.28.120">
    <property type="entry name" value="Ribosomal protein L33"/>
    <property type="match status" value="1"/>
</dbReference>
<dbReference type="HAMAP" id="MF_00294">
    <property type="entry name" value="Ribosomal_bL33"/>
    <property type="match status" value="1"/>
</dbReference>
<dbReference type="InterPro" id="IPR001705">
    <property type="entry name" value="Ribosomal_bL33"/>
</dbReference>
<dbReference type="InterPro" id="IPR018264">
    <property type="entry name" value="Ribosomal_bL33_CS"/>
</dbReference>
<dbReference type="InterPro" id="IPR038584">
    <property type="entry name" value="Ribosomal_bL33_sf"/>
</dbReference>
<dbReference type="InterPro" id="IPR011332">
    <property type="entry name" value="Ribosomal_zn-bd"/>
</dbReference>
<dbReference type="NCBIfam" id="NF001764">
    <property type="entry name" value="PRK00504.1"/>
    <property type="match status" value="1"/>
</dbReference>
<dbReference type="NCBIfam" id="NF001860">
    <property type="entry name" value="PRK00595.1"/>
    <property type="match status" value="1"/>
</dbReference>
<dbReference type="NCBIfam" id="TIGR01023">
    <property type="entry name" value="rpmG_bact"/>
    <property type="match status" value="1"/>
</dbReference>
<dbReference type="PANTHER" id="PTHR43168">
    <property type="entry name" value="50S RIBOSOMAL PROTEIN L33, CHLOROPLASTIC"/>
    <property type="match status" value="1"/>
</dbReference>
<dbReference type="PANTHER" id="PTHR43168:SF2">
    <property type="entry name" value="LARGE RIBOSOMAL SUBUNIT PROTEIN BL33C"/>
    <property type="match status" value="1"/>
</dbReference>
<dbReference type="Pfam" id="PF00471">
    <property type="entry name" value="Ribosomal_L33"/>
    <property type="match status" value="1"/>
</dbReference>
<dbReference type="SUPFAM" id="SSF57829">
    <property type="entry name" value="Zn-binding ribosomal proteins"/>
    <property type="match status" value="1"/>
</dbReference>
<dbReference type="PROSITE" id="PS00582">
    <property type="entry name" value="RIBOSOMAL_L33"/>
    <property type="match status" value="1"/>
</dbReference>
<proteinExistence type="inferred from homology"/>
<name>RL332_LACJO</name>
<gene>
    <name evidence="1" type="primary">rpmG2</name>
    <name type="ordered locus">LJ_1619.2</name>
    <name type="ORF">LJ_1619b</name>
</gene>
<organism>
    <name type="scientific">Lactobacillus johnsonii (strain CNCM I-12250 / La1 / NCC 533)</name>
    <dbReference type="NCBI Taxonomy" id="257314"/>
    <lineage>
        <taxon>Bacteria</taxon>
        <taxon>Bacillati</taxon>
        <taxon>Bacillota</taxon>
        <taxon>Bacilli</taxon>
        <taxon>Lactobacillales</taxon>
        <taxon>Lactobacillaceae</taxon>
        <taxon>Lactobacillus</taxon>
    </lineage>
</organism>
<accession>Q74IE7</accession>
<protein>
    <recommendedName>
        <fullName evidence="1">Large ribosomal subunit protein bL33B</fullName>
    </recommendedName>
    <alternativeName>
        <fullName evidence="1">50S ribosomal protein L33 2</fullName>
    </alternativeName>
</protein>
<evidence type="ECO:0000255" key="1">
    <source>
        <dbReference type="HAMAP-Rule" id="MF_00294"/>
    </source>
</evidence>
<feature type="chain" id="PRO_0000356507" description="Large ribosomal subunit protein bL33B">
    <location>
        <begin position="1"/>
        <end position="49"/>
    </location>
</feature>
<sequence length="49" mass="5869">MAEHIILECTECGDRSYLSEKNKRKHPERLALKKYCPVERKVTLHRETK</sequence>
<keyword id="KW-0687">Ribonucleoprotein</keyword>
<keyword id="KW-0689">Ribosomal protein</keyword>